<evidence type="ECO:0000250" key="1"/>
<evidence type="ECO:0000255" key="2"/>
<evidence type="ECO:0000305" key="3"/>
<feature type="signal peptide">
    <location>
        <begin position="1"/>
        <end position="20"/>
    </location>
</feature>
<feature type="chain" id="PRO_0000011750" description="Thyrotropin subunit beta">
    <location>
        <begin position="21"/>
        <end position="132"/>
    </location>
</feature>
<feature type="propeptide" id="PRO_0000011751">
    <location>
        <begin position="133"/>
        <end position="138"/>
    </location>
</feature>
<feature type="glycosylation site" description="N-linked (GlcNAc...) asparagine" evidence="2">
    <location>
        <position position="43"/>
    </location>
</feature>
<feature type="disulfide bond" evidence="1">
    <location>
        <begin position="22"/>
        <end position="72"/>
    </location>
</feature>
<feature type="disulfide bond" evidence="1">
    <location>
        <begin position="36"/>
        <end position="87"/>
    </location>
</feature>
<feature type="disulfide bond" evidence="1">
    <location>
        <begin position="39"/>
        <end position="125"/>
    </location>
</feature>
<feature type="disulfide bond" evidence="1">
    <location>
        <begin position="47"/>
        <end position="103"/>
    </location>
</feature>
<feature type="disulfide bond" evidence="1">
    <location>
        <begin position="51"/>
        <end position="105"/>
    </location>
</feature>
<feature type="disulfide bond" evidence="1">
    <location>
        <begin position="108"/>
        <end position="115"/>
    </location>
</feature>
<protein>
    <recommendedName>
        <fullName>Thyrotropin subunit beta</fullName>
    </recommendedName>
    <alternativeName>
        <fullName>Thyroid-stimulating hormone subunit beta</fullName>
        <shortName>TSH-B</shortName>
        <shortName>TSH-beta</shortName>
    </alternativeName>
    <alternativeName>
        <fullName>Thyrotropin beta chain</fullName>
    </alternativeName>
</protein>
<name>TSHB_MOUSE</name>
<gene>
    <name type="primary">Tshb</name>
</gene>
<dbReference type="EMBL" id="M20537">
    <property type="protein sequence ID" value="AAA40494.1"/>
    <property type="molecule type" value="Genomic_DNA"/>
</dbReference>
<dbReference type="EMBL" id="M20536">
    <property type="protein sequence ID" value="AAA40494.1"/>
    <property type="status" value="JOINED"/>
    <property type="molecule type" value="Genomic_DNA"/>
</dbReference>
<dbReference type="EMBL" id="M22740">
    <property type="protein sequence ID" value="AAA40493.1"/>
    <property type="molecule type" value="Genomic_DNA"/>
</dbReference>
<dbReference type="EMBL" id="M35719">
    <property type="protein sequence ID" value="AAA37307.1"/>
    <property type="molecule type" value="mRNA"/>
</dbReference>
<dbReference type="EMBL" id="M35720">
    <property type="protein sequence ID" value="AAA37308.1"/>
    <property type="molecule type" value="mRNA"/>
</dbReference>
<dbReference type="EMBL" id="M35721">
    <property type="protein sequence ID" value="AAA37309.1"/>
    <property type="molecule type" value="mRNA"/>
</dbReference>
<dbReference type="EMBL" id="M35723">
    <property type="protein sequence ID" value="AAA37310.1"/>
    <property type="molecule type" value="mRNA"/>
</dbReference>
<dbReference type="EMBL" id="M54943">
    <property type="protein sequence ID" value="AAA40492.1"/>
    <property type="molecule type" value="mRNA"/>
</dbReference>
<dbReference type="CCDS" id="CCDS17689.1"/>
<dbReference type="PIR" id="A29479">
    <property type="entry name" value="A29479"/>
</dbReference>
<dbReference type="SMR" id="P12656"/>
<dbReference type="FunCoup" id="P12656">
    <property type="interactions" value="363"/>
</dbReference>
<dbReference type="STRING" id="10090.ENSMUSP00000029450"/>
<dbReference type="GlyCosmos" id="P12656">
    <property type="glycosylation" value="1 site, No reported glycans"/>
</dbReference>
<dbReference type="GlyGen" id="P12656">
    <property type="glycosylation" value="1 site"/>
</dbReference>
<dbReference type="PaxDb" id="10090-ENSMUSP00000029450"/>
<dbReference type="AGR" id="MGI:98848"/>
<dbReference type="MGI" id="MGI:98848">
    <property type="gene designation" value="Tshb"/>
</dbReference>
<dbReference type="eggNOG" id="ENOG502S2JW">
    <property type="taxonomic scope" value="Eukaryota"/>
</dbReference>
<dbReference type="InParanoid" id="P12656"/>
<dbReference type="PhylomeDB" id="P12656"/>
<dbReference type="Reactome" id="R-MMU-209822">
    <property type="pathway name" value="Glycoprotein hormones"/>
</dbReference>
<dbReference type="Reactome" id="R-MMU-209968">
    <property type="pathway name" value="Thyroxine biosynthesis"/>
</dbReference>
<dbReference type="Reactome" id="R-MMU-375281">
    <property type="pathway name" value="Hormone ligand-binding receptors"/>
</dbReference>
<dbReference type="Reactome" id="R-MMU-418555">
    <property type="pathway name" value="G alpha (s) signalling events"/>
</dbReference>
<dbReference type="PRO" id="PR:P12656"/>
<dbReference type="Proteomes" id="UP000000589">
    <property type="component" value="Unplaced"/>
</dbReference>
<dbReference type="RNAct" id="P12656">
    <property type="molecule type" value="protein"/>
</dbReference>
<dbReference type="GO" id="GO:0005737">
    <property type="term" value="C:cytoplasm"/>
    <property type="evidence" value="ECO:0000314"/>
    <property type="project" value="MGI"/>
</dbReference>
<dbReference type="GO" id="GO:0005576">
    <property type="term" value="C:extracellular region"/>
    <property type="evidence" value="ECO:0007669"/>
    <property type="project" value="UniProtKB-SubCell"/>
</dbReference>
<dbReference type="GO" id="GO:0005179">
    <property type="term" value="F:hormone activity"/>
    <property type="evidence" value="ECO:0007669"/>
    <property type="project" value="UniProtKB-KW"/>
</dbReference>
<dbReference type="CDD" id="cd00069">
    <property type="entry name" value="GHB_like"/>
    <property type="match status" value="1"/>
</dbReference>
<dbReference type="FunFam" id="2.10.90.10:FF:000007">
    <property type="entry name" value="Luteinizing hormone beta subunit"/>
    <property type="match status" value="1"/>
</dbReference>
<dbReference type="Gene3D" id="2.10.90.10">
    <property type="entry name" value="Cystine-knot cytokines"/>
    <property type="match status" value="1"/>
</dbReference>
<dbReference type="InterPro" id="IPR029034">
    <property type="entry name" value="Cystine-knot_cytokine"/>
</dbReference>
<dbReference type="InterPro" id="IPR006208">
    <property type="entry name" value="Glyco_hormone_CN"/>
</dbReference>
<dbReference type="InterPro" id="IPR001545">
    <property type="entry name" value="Gonadotropin_bsu"/>
</dbReference>
<dbReference type="InterPro" id="IPR018245">
    <property type="entry name" value="Gonadotropin_bsu_CS"/>
</dbReference>
<dbReference type="PANTHER" id="PTHR11515">
    <property type="entry name" value="GLYCOPROTEIN HORMONE BETA CHAIN"/>
    <property type="match status" value="1"/>
</dbReference>
<dbReference type="PANTHER" id="PTHR11515:SF5">
    <property type="entry name" value="THYROTROPIN SUBUNIT BETA"/>
    <property type="match status" value="1"/>
</dbReference>
<dbReference type="Pfam" id="PF00007">
    <property type="entry name" value="Cys_knot"/>
    <property type="match status" value="1"/>
</dbReference>
<dbReference type="SMART" id="SM00068">
    <property type="entry name" value="GHB"/>
    <property type="match status" value="1"/>
</dbReference>
<dbReference type="SUPFAM" id="SSF57501">
    <property type="entry name" value="Cystine-knot cytokines"/>
    <property type="match status" value="1"/>
</dbReference>
<dbReference type="PROSITE" id="PS00261">
    <property type="entry name" value="GLYCO_HORMONE_BETA_1"/>
    <property type="match status" value="1"/>
</dbReference>
<dbReference type="PROSITE" id="PS00689">
    <property type="entry name" value="GLYCO_HORMONE_BETA_2"/>
    <property type="match status" value="1"/>
</dbReference>
<proteinExistence type="evidence at transcript level"/>
<accession>P12656</accession>
<organism>
    <name type="scientific">Mus musculus</name>
    <name type="common">Mouse</name>
    <dbReference type="NCBI Taxonomy" id="10090"/>
    <lineage>
        <taxon>Eukaryota</taxon>
        <taxon>Metazoa</taxon>
        <taxon>Chordata</taxon>
        <taxon>Craniata</taxon>
        <taxon>Vertebrata</taxon>
        <taxon>Euteleostomi</taxon>
        <taxon>Mammalia</taxon>
        <taxon>Eutheria</taxon>
        <taxon>Euarchontoglires</taxon>
        <taxon>Glires</taxon>
        <taxon>Rodentia</taxon>
        <taxon>Myomorpha</taxon>
        <taxon>Muroidea</taxon>
        <taxon>Muridae</taxon>
        <taxon>Murinae</taxon>
        <taxon>Mus</taxon>
        <taxon>Mus</taxon>
    </lineage>
</organism>
<comment type="function">
    <text>Indispensable for the control of thyroid structure and metabolism.</text>
</comment>
<comment type="subunit">
    <text>Heterodimer of a common alpha chain and a unique beta chain which confers biological specificity to thyrotropin, lutropin, follitropin and gonadotropin.</text>
</comment>
<comment type="subcellular location">
    <subcellularLocation>
        <location>Secreted</location>
    </subcellularLocation>
</comment>
<comment type="similarity">
    <text evidence="3">Belongs to the glycoprotein hormones subunit beta family.</text>
</comment>
<reference key="1">
    <citation type="journal article" date="1988" name="DNA">
        <title>Organization and nucleotide sequence of the gene encoding the beta-subunit of murine thyrotropin.</title>
        <authorList>
            <person name="Gordon D.F."/>
            <person name="Wood W.M."/>
            <person name="Ridgway E.C."/>
        </authorList>
    </citation>
    <scope>NUCLEOTIDE SEQUENCE [GENOMIC DNA]</scope>
</reference>
<reference key="2">
    <citation type="journal article" date="1987" name="J. Biol. Chem.">
        <title>Expression of the gene for the beta subunit of mouse thyrotropin results in multiple mRNAs differing in their 5'-untranslated regions.</title>
        <authorList>
            <person name="Wolf O."/>
            <person name="Kourides I.A."/>
            <person name="Gurr J.A."/>
        </authorList>
    </citation>
    <scope>NUCLEOTIDE SEQUENCE [GENOMIC DNA]</scope>
</reference>
<reference key="3">
    <citation type="journal article" date="1984" name="Recent Prog. Horm. Res.">
        <title>The regulation and organization of thyroid stimulating hormone genes.</title>
        <authorList>
            <person name="Kourides I.A."/>
            <person name="Gurr J.A."/>
            <person name="Wolf O."/>
        </authorList>
    </citation>
    <scope>NUCLEOTIDE SEQUENCE</scope>
</reference>
<reference key="4">
    <citation type="journal article" date="1987" name="Mol. Endocrinol.">
        <title>Expression of the beta-subunit gene of murine thyrotropin results in multiple messenger ribonucleic acid species which are generated by alternative exon splicing.</title>
        <authorList>
            <person name="Wood W.M."/>
            <person name="Gordon D.F."/>
            <person name="Ridgway E.C."/>
        </authorList>
    </citation>
    <scope>NUCLEOTIDE SEQUENCE OF 1-8</scope>
    <source>
        <strain>LAF1</strain>
    </source>
</reference>
<keyword id="KW-1015">Disulfide bond</keyword>
<keyword id="KW-0325">Glycoprotein</keyword>
<keyword id="KW-0372">Hormone</keyword>
<keyword id="KW-1185">Reference proteome</keyword>
<keyword id="KW-0964">Secreted</keyword>
<keyword id="KW-0732">Signal</keyword>
<sequence length="138" mass="15373">MSAAVLLSVLFALACGQAASFCIPTEYTMYVDRRECAYCLTINTTICAGYCMTRDINGKLFLPKYALSQDVCTYRDFIYRTVEIPGCPHHVTPYFSFPVAVSCKCGKCNTDNSDCIHEAVRTNYCTKPQSFYLGGFSV</sequence>